<gene>
    <name evidence="1" type="primary">ureE</name>
    <name type="ordered locus">PputGB1_2934</name>
</gene>
<keyword id="KW-0143">Chaperone</keyword>
<keyword id="KW-0963">Cytoplasm</keyword>
<keyword id="KW-0533">Nickel</keyword>
<keyword id="KW-0996">Nickel insertion</keyword>
<accession>B0KUZ6</accession>
<dbReference type="EMBL" id="CP000926">
    <property type="protein sequence ID" value="ABY98828.1"/>
    <property type="molecule type" value="Genomic_DNA"/>
</dbReference>
<dbReference type="RefSeq" id="WP_012272561.1">
    <property type="nucleotide sequence ID" value="NC_010322.1"/>
</dbReference>
<dbReference type="SMR" id="B0KUZ6"/>
<dbReference type="KEGG" id="ppg:PputGB1_2934"/>
<dbReference type="eggNOG" id="COG2371">
    <property type="taxonomic scope" value="Bacteria"/>
</dbReference>
<dbReference type="HOGENOM" id="CLU_093757_2_0_6"/>
<dbReference type="Proteomes" id="UP000002157">
    <property type="component" value="Chromosome"/>
</dbReference>
<dbReference type="GO" id="GO:0005737">
    <property type="term" value="C:cytoplasm"/>
    <property type="evidence" value="ECO:0007669"/>
    <property type="project" value="UniProtKB-SubCell"/>
</dbReference>
<dbReference type="GO" id="GO:0016151">
    <property type="term" value="F:nickel cation binding"/>
    <property type="evidence" value="ECO:0007669"/>
    <property type="project" value="UniProtKB-UniRule"/>
</dbReference>
<dbReference type="GO" id="GO:0051082">
    <property type="term" value="F:unfolded protein binding"/>
    <property type="evidence" value="ECO:0007669"/>
    <property type="project" value="UniProtKB-UniRule"/>
</dbReference>
<dbReference type="GO" id="GO:0006457">
    <property type="term" value="P:protein folding"/>
    <property type="evidence" value="ECO:0007669"/>
    <property type="project" value="InterPro"/>
</dbReference>
<dbReference type="GO" id="GO:0065003">
    <property type="term" value="P:protein-containing complex assembly"/>
    <property type="evidence" value="ECO:0007669"/>
    <property type="project" value="InterPro"/>
</dbReference>
<dbReference type="GO" id="GO:0019627">
    <property type="term" value="P:urea metabolic process"/>
    <property type="evidence" value="ECO:0007669"/>
    <property type="project" value="InterPro"/>
</dbReference>
<dbReference type="CDD" id="cd00571">
    <property type="entry name" value="UreE"/>
    <property type="match status" value="1"/>
</dbReference>
<dbReference type="Gene3D" id="2.60.260.20">
    <property type="entry name" value="Urease metallochaperone UreE, N-terminal domain"/>
    <property type="match status" value="1"/>
</dbReference>
<dbReference type="Gene3D" id="3.30.70.790">
    <property type="entry name" value="UreE, C-terminal domain"/>
    <property type="match status" value="1"/>
</dbReference>
<dbReference type="HAMAP" id="MF_00822">
    <property type="entry name" value="UreE"/>
    <property type="match status" value="1"/>
</dbReference>
<dbReference type="InterPro" id="IPR012406">
    <property type="entry name" value="UreE"/>
</dbReference>
<dbReference type="InterPro" id="IPR007864">
    <property type="entry name" value="UreE_C_dom"/>
</dbReference>
<dbReference type="InterPro" id="IPR004029">
    <property type="entry name" value="UreE_N"/>
</dbReference>
<dbReference type="InterPro" id="IPR036118">
    <property type="entry name" value="UreE_N_sf"/>
</dbReference>
<dbReference type="NCBIfam" id="NF009751">
    <property type="entry name" value="PRK13261.1-1"/>
    <property type="match status" value="1"/>
</dbReference>
<dbReference type="Pfam" id="PF05194">
    <property type="entry name" value="UreE_C"/>
    <property type="match status" value="1"/>
</dbReference>
<dbReference type="Pfam" id="PF02814">
    <property type="entry name" value="UreE_N"/>
    <property type="match status" value="1"/>
</dbReference>
<dbReference type="PIRSF" id="PIRSF036402">
    <property type="entry name" value="Ureas_acces_UreE"/>
    <property type="match status" value="1"/>
</dbReference>
<dbReference type="SMART" id="SM00988">
    <property type="entry name" value="UreE_N"/>
    <property type="match status" value="1"/>
</dbReference>
<dbReference type="SUPFAM" id="SSF69737">
    <property type="entry name" value="Urease metallochaperone UreE, C-terminal domain"/>
    <property type="match status" value="1"/>
</dbReference>
<dbReference type="SUPFAM" id="SSF69287">
    <property type="entry name" value="Urease metallochaperone UreE, N-terminal domain"/>
    <property type="match status" value="1"/>
</dbReference>
<organism>
    <name type="scientific">Pseudomonas putida (strain GB-1)</name>
    <dbReference type="NCBI Taxonomy" id="76869"/>
    <lineage>
        <taxon>Bacteria</taxon>
        <taxon>Pseudomonadati</taxon>
        <taxon>Pseudomonadota</taxon>
        <taxon>Gammaproteobacteria</taxon>
        <taxon>Pseudomonadales</taxon>
        <taxon>Pseudomonadaceae</taxon>
        <taxon>Pseudomonas</taxon>
    </lineage>
</organism>
<reference key="1">
    <citation type="submission" date="2008-01" db="EMBL/GenBank/DDBJ databases">
        <title>Complete sequence of Pseudomonas putida GB-1.</title>
        <authorList>
            <consortium name="US DOE Joint Genome Institute"/>
            <person name="Copeland A."/>
            <person name="Lucas S."/>
            <person name="Lapidus A."/>
            <person name="Barry K."/>
            <person name="Glavina del Rio T."/>
            <person name="Dalin E."/>
            <person name="Tice H."/>
            <person name="Pitluck S."/>
            <person name="Bruce D."/>
            <person name="Goodwin L."/>
            <person name="Chertkov O."/>
            <person name="Brettin T."/>
            <person name="Detter J.C."/>
            <person name="Han C."/>
            <person name="Kuske C.R."/>
            <person name="Schmutz J."/>
            <person name="Larimer F."/>
            <person name="Land M."/>
            <person name="Hauser L."/>
            <person name="Kyrpides N."/>
            <person name="Kim E."/>
            <person name="McCarthy J.K."/>
            <person name="Richardson P."/>
        </authorList>
    </citation>
    <scope>NUCLEOTIDE SEQUENCE [LARGE SCALE GENOMIC DNA]</scope>
    <source>
        <strain>GB-1</strain>
    </source>
</reference>
<proteinExistence type="inferred from homology"/>
<sequence>MIVLTRRISDPGTLAVSGTVTLDVDSRIKSRLRLTLDDGREAGLMLERGHLLRGGELLADADGTHLIRVLAAPEAVSTVRCADPHLLARAAYHLGNRHVPLQIEPGLLRFQHDHVLDDMLRGLGLTVEAEQAPFEPEAGAYQSAPHGHSHAHGHDHPFVRLPAHS</sequence>
<evidence type="ECO:0000255" key="1">
    <source>
        <dbReference type="HAMAP-Rule" id="MF_00822"/>
    </source>
</evidence>
<evidence type="ECO:0000256" key="2">
    <source>
        <dbReference type="SAM" id="MobiDB-lite"/>
    </source>
</evidence>
<name>UREE_PSEPG</name>
<protein>
    <recommendedName>
        <fullName evidence="1">Urease accessory protein UreE</fullName>
    </recommendedName>
</protein>
<comment type="function">
    <text evidence="1">Involved in urease metallocenter assembly. Binds nickel. Probably functions as a nickel donor during metallocenter assembly.</text>
</comment>
<comment type="subcellular location">
    <subcellularLocation>
        <location evidence="1">Cytoplasm</location>
    </subcellularLocation>
</comment>
<comment type="similarity">
    <text evidence="1">Belongs to the UreE family.</text>
</comment>
<feature type="chain" id="PRO_1000083907" description="Urease accessory protein UreE">
    <location>
        <begin position="1"/>
        <end position="165"/>
    </location>
</feature>
<feature type="region of interest" description="Disordered" evidence="2">
    <location>
        <begin position="137"/>
        <end position="156"/>
    </location>
</feature>